<feature type="chain" id="PRO_1000063204" description="1-(5-phosphoribosyl)-5-[(5-phosphoribosylamino)methylideneamino] imidazole-4-carboxamide isomerase">
    <location>
        <begin position="1"/>
        <end position="245"/>
    </location>
</feature>
<feature type="active site" description="Proton acceptor" evidence="1">
    <location>
        <position position="7"/>
    </location>
</feature>
<feature type="active site" description="Proton donor" evidence="1">
    <location>
        <position position="129"/>
    </location>
</feature>
<gene>
    <name evidence="1" type="primary">hisA</name>
    <name type="ordered locus">EcE24377A_2315</name>
</gene>
<sequence length="245" mass="26016">MIIPALDLIDGTVVRLHQGDYGKQRDYGNDPLPRLQDYAAQGAEVLHLVDLTGAKDPAKRQIPLIKTLVAGVNVPVQVGGGVRSEEDVAALLEAGVARVVVGSTAVKSPEMVKGWFERFGADALVLALDVRIDEQGNKQVAVSGWQENSGVSLEQLVETYLPVGLKHVLCTDISRDGTLAGSNVSLYEEVCARYPQVAFQSSGGIGDIDDVAALRGTGVRGVIVGRALLEGKFTVKEAIACWQNA</sequence>
<comment type="catalytic activity">
    <reaction evidence="1">
        <text>1-(5-phospho-beta-D-ribosyl)-5-[(5-phospho-beta-D-ribosylamino)methylideneamino]imidazole-4-carboxamide = 5-[(5-phospho-1-deoxy-D-ribulos-1-ylimino)methylamino]-1-(5-phospho-beta-D-ribosyl)imidazole-4-carboxamide</text>
        <dbReference type="Rhea" id="RHEA:15469"/>
        <dbReference type="ChEBI" id="CHEBI:58435"/>
        <dbReference type="ChEBI" id="CHEBI:58525"/>
        <dbReference type="EC" id="5.3.1.16"/>
    </reaction>
</comment>
<comment type="pathway">
    <text evidence="1">Amino-acid biosynthesis; L-histidine biosynthesis; L-histidine from 5-phospho-alpha-D-ribose 1-diphosphate: step 4/9.</text>
</comment>
<comment type="subcellular location">
    <subcellularLocation>
        <location evidence="1">Cytoplasm</location>
    </subcellularLocation>
</comment>
<comment type="similarity">
    <text evidence="1">Belongs to the HisA/HisF family.</text>
</comment>
<keyword id="KW-0028">Amino-acid biosynthesis</keyword>
<keyword id="KW-0963">Cytoplasm</keyword>
<keyword id="KW-0368">Histidine biosynthesis</keyword>
<keyword id="KW-0413">Isomerase</keyword>
<keyword id="KW-1185">Reference proteome</keyword>
<proteinExistence type="inferred from homology"/>
<organism>
    <name type="scientific">Escherichia coli O139:H28 (strain E24377A / ETEC)</name>
    <dbReference type="NCBI Taxonomy" id="331111"/>
    <lineage>
        <taxon>Bacteria</taxon>
        <taxon>Pseudomonadati</taxon>
        <taxon>Pseudomonadota</taxon>
        <taxon>Gammaproteobacteria</taxon>
        <taxon>Enterobacterales</taxon>
        <taxon>Enterobacteriaceae</taxon>
        <taxon>Escherichia</taxon>
    </lineage>
</organism>
<reference key="1">
    <citation type="journal article" date="2008" name="J. Bacteriol.">
        <title>The pangenome structure of Escherichia coli: comparative genomic analysis of E. coli commensal and pathogenic isolates.</title>
        <authorList>
            <person name="Rasko D.A."/>
            <person name="Rosovitz M.J."/>
            <person name="Myers G.S.A."/>
            <person name="Mongodin E.F."/>
            <person name="Fricke W.F."/>
            <person name="Gajer P."/>
            <person name="Crabtree J."/>
            <person name="Sebaihia M."/>
            <person name="Thomson N.R."/>
            <person name="Chaudhuri R."/>
            <person name="Henderson I.R."/>
            <person name="Sperandio V."/>
            <person name="Ravel J."/>
        </authorList>
    </citation>
    <scope>NUCLEOTIDE SEQUENCE [LARGE SCALE GENOMIC DNA]</scope>
    <source>
        <strain>E24377A / ETEC</strain>
    </source>
</reference>
<evidence type="ECO:0000255" key="1">
    <source>
        <dbReference type="HAMAP-Rule" id="MF_01014"/>
    </source>
</evidence>
<accession>A7ZNJ6</accession>
<dbReference type="EC" id="5.3.1.16" evidence="1"/>
<dbReference type="EMBL" id="CP000800">
    <property type="protein sequence ID" value="ABV19223.1"/>
    <property type="molecule type" value="Genomic_DNA"/>
</dbReference>
<dbReference type="RefSeq" id="WP_000586445.1">
    <property type="nucleotide sequence ID" value="NC_009801.1"/>
</dbReference>
<dbReference type="SMR" id="A7ZNJ6"/>
<dbReference type="KEGG" id="ecw:EcE24377A_2315"/>
<dbReference type="HOGENOM" id="CLU_048577_1_2_6"/>
<dbReference type="UniPathway" id="UPA00031">
    <property type="reaction ID" value="UER00009"/>
</dbReference>
<dbReference type="Proteomes" id="UP000001122">
    <property type="component" value="Chromosome"/>
</dbReference>
<dbReference type="GO" id="GO:0005737">
    <property type="term" value="C:cytoplasm"/>
    <property type="evidence" value="ECO:0007669"/>
    <property type="project" value="UniProtKB-SubCell"/>
</dbReference>
<dbReference type="GO" id="GO:0003949">
    <property type="term" value="F:1-(5-phosphoribosyl)-5-[(5-phosphoribosylamino)methylideneamino]imidazole-4-carboxamide isomerase activity"/>
    <property type="evidence" value="ECO:0007669"/>
    <property type="project" value="UniProtKB-UniRule"/>
</dbReference>
<dbReference type="GO" id="GO:0000105">
    <property type="term" value="P:L-histidine biosynthetic process"/>
    <property type="evidence" value="ECO:0007669"/>
    <property type="project" value="UniProtKB-UniRule"/>
</dbReference>
<dbReference type="GO" id="GO:0000162">
    <property type="term" value="P:L-tryptophan biosynthetic process"/>
    <property type="evidence" value="ECO:0007669"/>
    <property type="project" value="TreeGrafter"/>
</dbReference>
<dbReference type="CDD" id="cd04732">
    <property type="entry name" value="HisA"/>
    <property type="match status" value="1"/>
</dbReference>
<dbReference type="FunFam" id="3.20.20.70:FF:000009">
    <property type="entry name" value="1-(5-phosphoribosyl)-5-[(5-phosphoribosylamino)methylideneamino] imidazole-4-carboxamide isomerase"/>
    <property type="match status" value="1"/>
</dbReference>
<dbReference type="Gene3D" id="3.20.20.70">
    <property type="entry name" value="Aldolase class I"/>
    <property type="match status" value="1"/>
</dbReference>
<dbReference type="HAMAP" id="MF_01014">
    <property type="entry name" value="HisA"/>
    <property type="match status" value="1"/>
</dbReference>
<dbReference type="InterPro" id="IPR013785">
    <property type="entry name" value="Aldolase_TIM"/>
</dbReference>
<dbReference type="InterPro" id="IPR006062">
    <property type="entry name" value="His_biosynth"/>
</dbReference>
<dbReference type="InterPro" id="IPR006063">
    <property type="entry name" value="HisA_bact_arch"/>
</dbReference>
<dbReference type="InterPro" id="IPR044524">
    <property type="entry name" value="Isoase_HisA-like"/>
</dbReference>
<dbReference type="InterPro" id="IPR023016">
    <property type="entry name" value="Isoase_HisA-like_bact"/>
</dbReference>
<dbReference type="InterPro" id="IPR011060">
    <property type="entry name" value="RibuloseP-bd_barrel"/>
</dbReference>
<dbReference type="NCBIfam" id="TIGR00007">
    <property type="entry name" value="1-(5-phosphoribosyl)-5-[(5-phosphoribosylamino)methylideneamino]imidazole-4-carboxamide isomerase"/>
    <property type="match status" value="1"/>
</dbReference>
<dbReference type="PANTHER" id="PTHR43090">
    <property type="entry name" value="1-(5-PHOSPHORIBOSYL)-5-[(5-PHOSPHORIBOSYLAMINO)METHYLIDENEAMINO] IMIDAZOLE-4-CARBOXAMIDE ISOMERASE"/>
    <property type="match status" value="1"/>
</dbReference>
<dbReference type="PANTHER" id="PTHR43090:SF2">
    <property type="entry name" value="1-(5-PHOSPHORIBOSYL)-5-[(5-PHOSPHORIBOSYLAMINO)METHYLIDENEAMINO] IMIDAZOLE-4-CARBOXAMIDE ISOMERASE"/>
    <property type="match status" value="1"/>
</dbReference>
<dbReference type="Pfam" id="PF00977">
    <property type="entry name" value="His_biosynth"/>
    <property type="match status" value="1"/>
</dbReference>
<dbReference type="SUPFAM" id="SSF51366">
    <property type="entry name" value="Ribulose-phoshate binding barrel"/>
    <property type="match status" value="1"/>
</dbReference>
<protein>
    <recommendedName>
        <fullName evidence="1">1-(5-phosphoribosyl)-5-[(5-phosphoribosylamino)methylideneamino] imidazole-4-carboxamide isomerase</fullName>
        <ecNumber evidence="1">5.3.1.16</ecNumber>
    </recommendedName>
    <alternativeName>
        <fullName evidence="1">Phosphoribosylformimino-5-aminoimidazole carboxamide ribotide isomerase</fullName>
    </alternativeName>
</protein>
<name>HIS4_ECO24</name>